<sequence>MLGVIVACMQDMSSYMFGQWDTPLMVLIFFMVIDYLGDIVNAAVEKSLDFKKSYMGIAKIVSVLVVIIVSVLMDRLVNKGTWFFRTFTCYFYVANEGINILENCSKLGLPMPEKLMKTLEDLKNR</sequence>
<organism>
    <name type="scientific">Clostridium acetobutylicum (strain ATCC 824 / DSM 792 / JCM 1419 / IAM 19013 / LMG 5710 / NBRC 13948 / NRRL B-527 / VKM B-1787 / 2291 / W)</name>
    <dbReference type="NCBI Taxonomy" id="272562"/>
    <lineage>
        <taxon>Bacteria</taxon>
        <taxon>Bacillati</taxon>
        <taxon>Bacillota</taxon>
        <taxon>Clostridia</taxon>
        <taxon>Eubacteriales</taxon>
        <taxon>Clostridiaceae</taxon>
        <taxon>Clostridium</taxon>
    </lineage>
</organism>
<gene>
    <name type="ordered locus">CA_C1842</name>
</gene>
<reference key="1">
    <citation type="journal article" date="2001" name="J. Bacteriol.">
        <title>Genome sequence and comparative analysis of the solvent-producing bacterium Clostridium acetobutylicum.</title>
        <authorList>
            <person name="Noelling J."/>
            <person name="Breton G."/>
            <person name="Omelchenko M.V."/>
            <person name="Makarova K.S."/>
            <person name="Zeng Q."/>
            <person name="Gibson R."/>
            <person name="Lee H.M."/>
            <person name="Dubois J."/>
            <person name="Qiu D."/>
            <person name="Hitti J."/>
            <person name="Wolf Y.I."/>
            <person name="Tatusov R.L."/>
            <person name="Sabathe F."/>
            <person name="Doucette-Stamm L.A."/>
            <person name="Soucaille P."/>
            <person name="Daly M.J."/>
            <person name="Bennett G.N."/>
            <person name="Koonin E.V."/>
            <person name="Smith D.R."/>
        </authorList>
    </citation>
    <scope>NUCLEOTIDE SEQUENCE [LARGE SCALE GENOMIC DNA]</scope>
    <source>
        <strain>ATCC 824 / DSM 792 / JCM 1419 / IAM 19013 / LMG 5710 / NBRC 13948 / NRRL B-527 / VKM B-1787 / 2291 / W</strain>
    </source>
</reference>
<accession>Q97I14</accession>
<comment type="subcellular location">
    <subcellularLocation>
        <location evidence="2">Cell membrane</location>
        <topology evidence="2">Multi-pass membrane protein</topology>
    </subcellularLocation>
</comment>
<comment type="similarity">
    <text evidence="2">Belongs to the bacteriophage holin family. Cp-1 holin subfamily.</text>
</comment>
<evidence type="ECO:0000255" key="1"/>
<evidence type="ECO:0000305" key="2"/>
<dbReference type="EMBL" id="AE001437">
    <property type="protein sequence ID" value="AAK79806.1"/>
    <property type="molecule type" value="Genomic_DNA"/>
</dbReference>
<dbReference type="PIR" id="C97127">
    <property type="entry name" value="C97127"/>
</dbReference>
<dbReference type="RefSeq" id="NP_348466.1">
    <property type="nucleotide sequence ID" value="NC_003030.1"/>
</dbReference>
<dbReference type="RefSeq" id="WP_010965147.1">
    <property type="nucleotide sequence ID" value="NC_003030.1"/>
</dbReference>
<dbReference type="STRING" id="272562.CA_C1842"/>
<dbReference type="KEGG" id="cac:CA_C1842"/>
<dbReference type="PATRIC" id="fig|272562.8.peg.2047"/>
<dbReference type="eggNOG" id="COG4824">
    <property type="taxonomic scope" value="Bacteria"/>
</dbReference>
<dbReference type="HOGENOM" id="CLU_125939_4_0_9"/>
<dbReference type="OrthoDB" id="88184at2"/>
<dbReference type="Proteomes" id="UP000000814">
    <property type="component" value="Chromosome"/>
</dbReference>
<dbReference type="GO" id="GO:0005886">
    <property type="term" value="C:plasma membrane"/>
    <property type="evidence" value="ECO:0007669"/>
    <property type="project" value="UniProtKB-SubCell"/>
</dbReference>
<dbReference type="InterPro" id="IPR006480">
    <property type="entry name" value="Phage_holin_4_1"/>
</dbReference>
<dbReference type="NCBIfam" id="TIGR01593">
    <property type="entry name" value="holin_tox_secr"/>
    <property type="match status" value="1"/>
</dbReference>
<dbReference type="Pfam" id="PF05105">
    <property type="entry name" value="Phage_holin_4_1"/>
    <property type="match status" value="1"/>
</dbReference>
<feature type="chain" id="PRO_0000172862" description="Uncharacterized protein CA_C1842">
    <location>
        <begin position="1"/>
        <end position="125"/>
    </location>
</feature>
<feature type="transmembrane region" description="Helical" evidence="1">
    <location>
        <begin position="22"/>
        <end position="44"/>
    </location>
</feature>
<feature type="transmembrane region" description="Helical" evidence="1">
    <location>
        <begin position="54"/>
        <end position="73"/>
    </location>
</feature>
<keyword id="KW-1003">Cell membrane</keyword>
<keyword id="KW-0472">Membrane</keyword>
<keyword id="KW-1185">Reference proteome</keyword>
<keyword id="KW-0812">Transmembrane</keyword>
<keyword id="KW-1133">Transmembrane helix</keyword>
<protein>
    <recommendedName>
        <fullName>Uncharacterized protein CA_C1842</fullName>
    </recommendedName>
</protein>
<name>Y1842_CLOAB</name>
<proteinExistence type="inferred from homology"/>